<protein>
    <recommendedName>
        <fullName evidence="1">Urease accessory protein UreF</fullName>
    </recommendedName>
</protein>
<proteinExistence type="inferred from homology"/>
<feature type="chain" id="PRO_0000344182" description="Urease accessory protein UreF">
    <location>
        <begin position="1"/>
        <end position="229"/>
    </location>
</feature>
<name>UREF_STAA9</name>
<accession>A5IV73</accession>
<dbReference type="EMBL" id="CP000703">
    <property type="protein sequence ID" value="ABQ50096.1"/>
    <property type="molecule type" value="Genomic_DNA"/>
</dbReference>
<dbReference type="RefSeq" id="WP_000565254.1">
    <property type="nucleotide sequence ID" value="NC_009487.1"/>
</dbReference>
<dbReference type="SMR" id="A5IV73"/>
<dbReference type="KEGG" id="saj:SaurJH9_2316"/>
<dbReference type="HOGENOM" id="CLU_049215_4_2_9"/>
<dbReference type="GO" id="GO:0005737">
    <property type="term" value="C:cytoplasm"/>
    <property type="evidence" value="ECO:0007669"/>
    <property type="project" value="UniProtKB-SubCell"/>
</dbReference>
<dbReference type="GO" id="GO:0016151">
    <property type="term" value="F:nickel cation binding"/>
    <property type="evidence" value="ECO:0007669"/>
    <property type="project" value="UniProtKB-UniRule"/>
</dbReference>
<dbReference type="Gene3D" id="1.10.4190.10">
    <property type="entry name" value="Urease accessory protein UreF"/>
    <property type="match status" value="1"/>
</dbReference>
<dbReference type="HAMAP" id="MF_01385">
    <property type="entry name" value="UreF"/>
    <property type="match status" value="1"/>
</dbReference>
<dbReference type="InterPro" id="IPR002639">
    <property type="entry name" value="UreF"/>
</dbReference>
<dbReference type="InterPro" id="IPR038277">
    <property type="entry name" value="UreF_sf"/>
</dbReference>
<dbReference type="PANTHER" id="PTHR33620">
    <property type="entry name" value="UREASE ACCESSORY PROTEIN F"/>
    <property type="match status" value="1"/>
</dbReference>
<dbReference type="PANTHER" id="PTHR33620:SF1">
    <property type="entry name" value="UREASE ACCESSORY PROTEIN F"/>
    <property type="match status" value="1"/>
</dbReference>
<dbReference type="Pfam" id="PF01730">
    <property type="entry name" value="UreF"/>
    <property type="match status" value="1"/>
</dbReference>
<dbReference type="PIRSF" id="PIRSF009467">
    <property type="entry name" value="Ureas_acces_UreF"/>
    <property type="match status" value="1"/>
</dbReference>
<evidence type="ECO:0000255" key="1">
    <source>
        <dbReference type="HAMAP-Rule" id="MF_01385"/>
    </source>
</evidence>
<reference key="1">
    <citation type="submission" date="2007-05" db="EMBL/GenBank/DDBJ databases">
        <title>Complete sequence of chromosome of Staphylococcus aureus subsp. aureus JH9.</title>
        <authorList>
            <consortium name="US DOE Joint Genome Institute"/>
            <person name="Copeland A."/>
            <person name="Lucas S."/>
            <person name="Lapidus A."/>
            <person name="Barry K."/>
            <person name="Detter J.C."/>
            <person name="Glavina del Rio T."/>
            <person name="Hammon N."/>
            <person name="Israni S."/>
            <person name="Pitluck S."/>
            <person name="Chain P."/>
            <person name="Malfatti S."/>
            <person name="Shin M."/>
            <person name="Vergez L."/>
            <person name="Schmutz J."/>
            <person name="Larimer F."/>
            <person name="Land M."/>
            <person name="Hauser L."/>
            <person name="Kyrpides N."/>
            <person name="Kim E."/>
            <person name="Tomasz A."/>
            <person name="Richardson P."/>
        </authorList>
    </citation>
    <scope>NUCLEOTIDE SEQUENCE [LARGE SCALE GENOMIC DNA]</scope>
    <source>
        <strain>JH9</strain>
    </source>
</reference>
<organism>
    <name type="scientific">Staphylococcus aureus (strain JH9)</name>
    <dbReference type="NCBI Taxonomy" id="359786"/>
    <lineage>
        <taxon>Bacteria</taxon>
        <taxon>Bacillati</taxon>
        <taxon>Bacillota</taxon>
        <taxon>Bacilli</taxon>
        <taxon>Bacillales</taxon>
        <taxon>Staphylococcaceae</taxon>
        <taxon>Staphylococcus</taxon>
    </lineage>
</organism>
<sequence length="229" mass="26552">MIDHTHLRLFQFCDSQFPTGAFSHSFGLETYIQRNIIHDDHTFIAWLKMFLQEQLTYSDGLAMRLVYDALENDDTQKVLHIDKLMFVQNLPKETRVGAKQMGTRMVKLALELYNSPWIAWYHQQMQDKKAKLNPAICFTMLGHHLGVDIETIIDYYLYQNVSSLTQNAVRAIPLGQTAGQKIVTHMIPYIEETRKQIFELKEADFGMTAPGLELNQMAHENVNVRIFIS</sequence>
<gene>
    <name evidence="1" type="primary">ureF</name>
    <name type="ordered locus">SaurJH9_2316</name>
</gene>
<comment type="function">
    <text evidence="1">Required for maturation of urease via the functional incorporation of the urease nickel metallocenter.</text>
</comment>
<comment type="subunit">
    <text evidence="1">UreD, UreF and UreG form a complex that acts as a GTP-hydrolysis-dependent molecular chaperone, activating the urease apoprotein by helping to assemble the nickel containing metallocenter of UreC. The UreE protein probably delivers the nickel.</text>
</comment>
<comment type="subcellular location">
    <subcellularLocation>
        <location evidence="1">Cytoplasm</location>
    </subcellularLocation>
</comment>
<comment type="similarity">
    <text evidence="1">Belongs to the UreF family.</text>
</comment>
<keyword id="KW-0143">Chaperone</keyword>
<keyword id="KW-0963">Cytoplasm</keyword>
<keyword id="KW-0996">Nickel insertion</keyword>